<organism>
    <name type="scientific">Escherichia coli O127:H6 (strain E2348/69 / EPEC)</name>
    <dbReference type="NCBI Taxonomy" id="574521"/>
    <lineage>
        <taxon>Bacteria</taxon>
        <taxon>Pseudomonadati</taxon>
        <taxon>Pseudomonadota</taxon>
        <taxon>Gammaproteobacteria</taxon>
        <taxon>Enterobacterales</taxon>
        <taxon>Enterobacteriaceae</taxon>
        <taxon>Escherichia</taxon>
    </lineage>
</organism>
<proteinExistence type="inferred from homology"/>
<gene>
    <name evidence="1" type="primary">clpX</name>
    <name type="ordered locus">E2348C_0373</name>
</gene>
<reference key="1">
    <citation type="journal article" date="2009" name="J. Bacteriol.">
        <title>Complete genome sequence and comparative genome analysis of enteropathogenic Escherichia coli O127:H6 strain E2348/69.</title>
        <authorList>
            <person name="Iguchi A."/>
            <person name="Thomson N.R."/>
            <person name="Ogura Y."/>
            <person name="Saunders D."/>
            <person name="Ooka T."/>
            <person name="Henderson I.R."/>
            <person name="Harris D."/>
            <person name="Asadulghani M."/>
            <person name="Kurokawa K."/>
            <person name="Dean P."/>
            <person name="Kenny B."/>
            <person name="Quail M.A."/>
            <person name="Thurston S."/>
            <person name="Dougan G."/>
            <person name="Hayashi T."/>
            <person name="Parkhill J."/>
            <person name="Frankel G."/>
        </authorList>
    </citation>
    <scope>NUCLEOTIDE SEQUENCE [LARGE SCALE GENOMIC DNA]</scope>
    <source>
        <strain>E2348/69 / EPEC</strain>
    </source>
</reference>
<name>CLPX_ECO27</name>
<sequence>MTDKRKDGSGKLLYCSFCGKSQHEVRKLIAGPSVYICDECVDLCNDIIREEIKEVAPHRERSALPTPHEIRNHLDDYVIGQEQAKKVLAVAVYNHYKRLRNGDTSNGVELGKSNILLIGPTGSGKTLLAETLARLLDVPFTMADATTLTEAGYVGEDVENIIQKLLQKCDYDVQKAQRGIVYIDEIDKISRKSDNPSITRDVSGEGVQQALLKLIEGTVAAVPPQGGRKHPQQEFLQVDTSKILFICGGAFAGLDKVISHRVETGSGIGFGATVKAKSDKASEGELLAQVEPEDLIKFGLIPEFIGRLPVVATLNELSEEALIQILKEPKNALTKQYQALFNLEGVDLEFRDEALDAIAKKAMARKTGARGLRSIVEAALLDTMYDLPSMEDVEKVVIDESVIDGQSKPLLIYGKPEAQQASGE</sequence>
<keyword id="KW-0067">ATP-binding</keyword>
<keyword id="KW-0143">Chaperone</keyword>
<keyword id="KW-0479">Metal-binding</keyword>
<keyword id="KW-0547">Nucleotide-binding</keyword>
<keyword id="KW-1185">Reference proteome</keyword>
<keyword id="KW-0862">Zinc</keyword>
<comment type="function">
    <text evidence="1">ATP-dependent specificity component of the Clp protease. It directs the protease to specific substrates. Can perform chaperone functions in the absence of ClpP.</text>
</comment>
<comment type="subunit">
    <text evidence="1">Component of the ClpX-ClpP complex. Forms a hexameric ring that, in the presence of ATP, binds to fourteen ClpP subunits assembled into a disk-like structure with a central cavity, resembling the structure of eukaryotic proteasomes.</text>
</comment>
<comment type="similarity">
    <text evidence="1">Belongs to the ClpX chaperone family.</text>
</comment>
<dbReference type="EMBL" id="FM180568">
    <property type="protein sequence ID" value="CAS07921.1"/>
    <property type="molecule type" value="Genomic_DNA"/>
</dbReference>
<dbReference type="RefSeq" id="WP_000130305.1">
    <property type="nucleotide sequence ID" value="NC_011601.1"/>
</dbReference>
<dbReference type="SMR" id="B7UJR1"/>
<dbReference type="GeneID" id="93777016"/>
<dbReference type="KEGG" id="ecg:E2348C_0373"/>
<dbReference type="HOGENOM" id="CLU_014218_8_2_6"/>
<dbReference type="Proteomes" id="UP000008205">
    <property type="component" value="Chromosome"/>
</dbReference>
<dbReference type="GO" id="GO:0009376">
    <property type="term" value="C:HslUV protease complex"/>
    <property type="evidence" value="ECO:0007669"/>
    <property type="project" value="TreeGrafter"/>
</dbReference>
<dbReference type="GO" id="GO:0005524">
    <property type="term" value="F:ATP binding"/>
    <property type="evidence" value="ECO:0007669"/>
    <property type="project" value="UniProtKB-UniRule"/>
</dbReference>
<dbReference type="GO" id="GO:0016887">
    <property type="term" value="F:ATP hydrolysis activity"/>
    <property type="evidence" value="ECO:0007669"/>
    <property type="project" value="InterPro"/>
</dbReference>
<dbReference type="GO" id="GO:0140662">
    <property type="term" value="F:ATP-dependent protein folding chaperone"/>
    <property type="evidence" value="ECO:0007669"/>
    <property type="project" value="InterPro"/>
</dbReference>
<dbReference type="GO" id="GO:0046983">
    <property type="term" value="F:protein dimerization activity"/>
    <property type="evidence" value="ECO:0007669"/>
    <property type="project" value="InterPro"/>
</dbReference>
<dbReference type="GO" id="GO:0051082">
    <property type="term" value="F:unfolded protein binding"/>
    <property type="evidence" value="ECO:0007669"/>
    <property type="project" value="UniProtKB-UniRule"/>
</dbReference>
<dbReference type="GO" id="GO:0008270">
    <property type="term" value="F:zinc ion binding"/>
    <property type="evidence" value="ECO:0007669"/>
    <property type="project" value="InterPro"/>
</dbReference>
<dbReference type="GO" id="GO:0051301">
    <property type="term" value="P:cell division"/>
    <property type="evidence" value="ECO:0007669"/>
    <property type="project" value="TreeGrafter"/>
</dbReference>
<dbReference type="GO" id="GO:0051603">
    <property type="term" value="P:proteolysis involved in protein catabolic process"/>
    <property type="evidence" value="ECO:0007669"/>
    <property type="project" value="TreeGrafter"/>
</dbReference>
<dbReference type="CDD" id="cd19497">
    <property type="entry name" value="RecA-like_ClpX"/>
    <property type="match status" value="1"/>
</dbReference>
<dbReference type="FunFam" id="1.10.8.60:FF:000002">
    <property type="entry name" value="ATP-dependent Clp protease ATP-binding subunit ClpX"/>
    <property type="match status" value="1"/>
</dbReference>
<dbReference type="FunFam" id="3.40.50.300:FF:000005">
    <property type="entry name" value="ATP-dependent Clp protease ATP-binding subunit ClpX"/>
    <property type="match status" value="1"/>
</dbReference>
<dbReference type="Gene3D" id="1.10.8.60">
    <property type="match status" value="1"/>
</dbReference>
<dbReference type="Gene3D" id="6.20.220.10">
    <property type="entry name" value="ClpX chaperone, C4-type zinc finger domain"/>
    <property type="match status" value="1"/>
</dbReference>
<dbReference type="Gene3D" id="3.40.50.300">
    <property type="entry name" value="P-loop containing nucleotide triphosphate hydrolases"/>
    <property type="match status" value="1"/>
</dbReference>
<dbReference type="HAMAP" id="MF_00175">
    <property type="entry name" value="ClpX"/>
    <property type="match status" value="1"/>
</dbReference>
<dbReference type="InterPro" id="IPR003593">
    <property type="entry name" value="AAA+_ATPase"/>
</dbReference>
<dbReference type="InterPro" id="IPR050052">
    <property type="entry name" value="ATP-dep_Clp_protease_ClpX"/>
</dbReference>
<dbReference type="InterPro" id="IPR003959">
    <property type="entry name" value="ATPase_AAA_core"/>
</dbReference>
<dbReference type="InterPro" id="IPR019489">
    <property type="entry name" value="Clp_ATPase_C"/>
</dbReference>
<dbReference type="InterPro" id="IPR004487">
    <property type="entry name" value="Clp_protease_ATP-bd_su_ClpX"/>
</dbReference>
<dbReference type="InterPro" id="IPR046425">
    <property type="entry name" value="ClpX_bact"/>
</dbReference>
<dbReference type="InterPro" id="IPR027417">
    <property type="entry name" value="P-loop_NTPase"/>
</dbReference>
<dbReference type="InterPro" id="IPR010603">
    <property type="entry name" value="Znf_CppX_C4"/>
</dbReference>
<dbReference type="InterPro" id="IPR038366">
    <property type="entry name" value="Znf_CppX_C4_sf"/>
</dbReference>
<dbReference type="NCBIfam" id="TIGR00382">
    <property type="entry name" value="clpX"/>
    <property type="match status" value="1"/>
</dbReference>
<dbReference type="NCBIfam" id="NF003745">
    <property type="entry name" value="PRK05342.1"/>
    <property type="match status" value="1"/>
</dbReference>
<dbReference type="PANTHER" id="PTHR48102:SF7">
    <property type="entry name" value="ATP-DEPENDENT CLP PROTEASE ATP-BINDING SUBUNIT CLPX-LIKE, MITOCHONDRIAL"/>
    <property type="match status" value="1"/>
</dbReference>
<dbReference type="PANTHER" id="PTHR48102">
    <property type="entry name" value="ATP-DEPENDENT CLP PROTEASE ATP-BINDING SUBUNIT CLPX-LIKE, MITOCHONDRIAL-RELATED"/>
    <property type="match status" value="1"/>
</dbReference>
<dbReference type="Pfam" id="PF07724">
    <property type="entry name" value="AAA_2"/>
    <property type="match status" value="1"/>
</dbReference>
<dbReference type="Pfam" id="PF10431">
    <property type="entry name" value="ClpB_D2-small"/>
    <property type="match status" value="1"/>
</dbReference>
<dbReference type="Pfam" id="PF06689">
    <property type="entry name" value="zf-C4_ClpX"/>
    <property type="match status" value="1"/>
</dbReference>
<dbReference type="SMART" id="SM00382">
    <property type="entry name" value="AAA"/>
    <property type="match status" value="1"/>
</dbReference>
<dbReference type="SMART" id="SM01086">
    <property type="entry name" value="ClpB_D2-small"/>
    <property type="match status" value="1"/>
</dbReference>
<dbReference type="SMART" id="SM00994">
    <property type="entry name" value="zf-C4_ClpX"/>
    <property type="match status" value="1"/>
</dbReference>
<dbReference type="SUPFAM" id="SSF57716">
    <property type="entry name" value="Glucocorticoid receptor-like (DNA-binding domain)"/>
    <property type="match status" value="1"/>
</dbReference>
<dbReference type="SUPFAM" id="SSF52540">
    <property type="entry name" value="P-loop containing nucleoside triphosphate hydrolases"/>
    <property type="match status" value="1"/>
</dbReference>
<dbReference type="PROSITE" id="PS51902">
    <property type="entry name" value="CLPX_ZB"/>
    <property type="match status" value="1"/>
</dbReference>
<accession>B7UJR1</accession>
<protein>
    <recommendedName>
        <fullName evidence="1">ATP-dependent Clp protease ATP-binding subunit ClpX</fullName>
    </recommendedName>
</protein>
<feature type="chain" id="PRO_1000123833" description="ATP-dependent Clp protease ATP-binding subunit ClpX">
    <location>
        <begin position="1"/>
        <end position="424"/>
    </location>
</feature>
<feature type="domain" description="ClpX-type ZB" evidence="2">
    <location>
        <begin position="2"/>
        <end position="56"/>
    </location>
</feature>
<feature type="binding site" evidence="2">
    <location>
        <position position="15"/>
    </location>
    <ligand>
        <name>Zn(2+)</name>
        <dbReference type="ChEBI" id="CHEBI:29105"/>
    </ligand>
</feature>
<feature type="binding site" evidence="2">
    <location>
        <position position="18"/>
    </location>
    <ligand>
        <name>Zn(2+)</name>
        <dbReference type="ChEBI" id="CHEBI:29105"/>
    </ligand>
</feature>
<feature type="binding site" evidence="2">
    <location>
        <position position="37"/>
    </location>
    <ligand>
        <name>Zn(2+)</name>
        <dbReference type="ChEBI" id="CHEBI:29105"/>
    </ligand>
</feature>
<feature type="binding site" evidence="2">
    <location>
        <position position="40"/>
    </location>
    <ligand>
        <name>Zn(2+)</name>
        <dbReference type="ChEBI" id="CHEBI:29105"/>
    </ligand>
</feature>
<feature type="binding site" evidence="1">
    <location>
        <begin position="120"/>
        <end position="127"/>
    </location>
    <ligand>
        <name>ATP</name>
        <dbReference type="ChEBI" id="CHEBI:30616"/>
    </ligand>
</feature>
<evidence type="ECO:0000255" key="1">
    <source>
        <dbReference type="HAMAP-Rule" id="MF_00175"/>
    </source>
</evidence>
<evidence type="ECO:0000255" key="2">
    <source>
        <dbReference type="PROSITE-ProRule" id="PRU01250"/>
    </source>
</evidence>